<gene>
    <name evidence="6" type="primary">kdgR</name>
</gene>
<keyword id="KW-0963">Cytoplasm</keyword>
<keyword id="KW-0238">DNA-binding</keyword>
<keyword id="KW-0678">Repressor</keyword>
<keyword id="KW-0804">Transcription</keyword>
<keyword id="KW-0805">Transcription regulation</keyword>
<comment type="function">
    <text evidence="3 4 5">Transcriptional repressor that negatively regulates the expression of genes involved in pectinolysis and in pectinase secretion (PubMed:1545709, PubMed:8107132, Ref.3). Controls genes involved in pectin catabolism, including the pectinase genes (pelA, pelB, pelC, pelE), genes involved in pectin catabolism (kdgT, ogl, kduI-kdgF) and the outT gene involved in pectinase secretion (PubMed:1545709, PubMed:8107132). Acts by binding directly to KdgR binding sites (KdgR-box) in the gene operator/promoter region (PubMed:1545709, PubMed:8107132).</text>
</comment>
<comment type="subunit">
    <text evidence="3 4">Homodimer.</text>
</comment>
<comment type="subcellular location">
    <subcellularLocation>
        <location evidence="7">Cytoplasm</location>
    </subcellularLocation>
</comment>
<comment type="disruption phenotype">
    <text evidence="5">Inactivation of the gene results in constitutive expression of genes of the polygalacturonate degradative pathway (pelA, pelD, pelE, ogl, kdul, kduD, kdgT, kdgK and kdgA).</text>
</comment>
<name>KDGR_DICCH</name>
<sequence length="305" mass="34960">MIFNRSVTYSNARLPYSKRSLYTKTRVLFFLKQKILSRVTTKMAIADLDKQPDSVSSVLKVFGILQALGEEREIGITELSQRVMMSKSTVYRFLQTMKSLGYVAQEGESEKYSLTLKLFELGAKALQNVDLIRSADIQMRELSALTRETIHLGALDEDSIVYIHKIDSMYNLRMYSRIGRRNPLHSTAIGKVLLAWRDREEVKEILSQVEFKRTTVHTIGSTEELLPQLDLVRQQGYGEDNEEQEEGLRCIAVPVFDRFGVVIAGLSISFPTIRFSEDNKHEYVAMLHTAARNISDQMGYHDYPF</sequence>
<reference key="1">
    <citation type="journal article" date="1991" name="Mol. Microbiol.">
        <title>Characterization of kdgR, a gene of Erwinia chrysanthemi that regulates pectin degradation.</title>
        <authorList>
            <person name="Reverchon S."/>
            <person name="Nasser W."/>
            <person name="Robert-Baudouy J."/>
        </authorList>
    </citation>
    <scope>NUCLEOTIDE SEQUENCE [GENOMIC DNA]</scope>
</reference>
<reference key="2">
    <citation type="submission" date="1998-11" db="EMBL/GenBank/DDBJ databases">
        <authorList>
            <person name="Reverchon S."/>
        </authorList>
    </citation>
    <scope>SEQUENCE REVISION TO N-TERMINUS</scope>
</reference>
<reference key="3">
    <citation type="journal article" date="1987" name="FEMS Microbiol. Lett.">
        <title>Tn5 insertion in kdgR, a regulatory gene of the polygalacturonate pathway in Erwinia chrysanthemi.</title>
        <authorList>
            <person name="Condemine G."/>
            <person name="Robert-Baudouy J."/>
        </authorList>
    </citation>
    <scope>FUNCTION</scope>
    <scope>DISRUPTION PHENOTYPE</scope>
</reference>
<reference key="4">
    <citation type="journal article" date="1992" name="Mol. Microbiol.">
        <title>Purification and functional characterization of the KdgR protein, a major repressor of pectinolysis genes of Erwinia chrysanthemi.</title>
        <authorList>
            <person name="Nasser W."/>
            <person name="Reverchon S."/>
            <person name="Robert-Baudouy J."/>
        </authorList>
    </citation>
    <scope>FUNCTION</scope>
    <scope>DNA-BINDING</scope>
    <scope>SUBUNIT</scope>
</reference>
<reference key="5">
    <citation type="journal article" date="1994" name="J. Mol. Biol.">
        <title>Specific interactions of Erwinia chrysanthemi KdgR repressor with different operators of genes involved in pectinolysis.</title>
        <authorList>
            <person name="Nasser W."/>
            <person name="Reverchon S."/>
            <person name="Condemine G."/>
            <person name="Robert-Baudouy J."/>
        </authorList>
    </citation>
    <scope>FUNCTION</scope>
    <scope>DNA-BINDING</scope>
    <scope>SUBUNIT</scope>
</reference>
<proteinExistence type="evidence at protein level"/>
<organism>
    <name type="scientific">Dickeya chrysanthemi</name>
    <name type="common">Pectobacterium chrysanthemi</name>
    <name type="synonym">Erwinia chrysanthemi</name>
    <dbReference type="NCBI Taxonomy" id="556"/>
    <lineage>
        <taxon>Bacteria</taxon>
        <taxon>Pseudomonadati</taxon>
        <taxon>Pseudomonadota</taxon>
        <taxon>Gammaproteobacteria</taxon>
        <taxon>Enterobacterales</taxon>
        <taxon>Pectobacteriaceae</taxon>
        <taxon>Dickeya</taxon>
    </lineage>
</organism>
<feature type="chain" id="PRO_0000201761" description="HTH-type transcriptional regulator KdgR">
    <location>
        <begin position="1"/>
        <end position="305"/>
    </location>
</feature>
<feature type="domain" description="HTH iclR-type" evidence="1">
    <location>
        <begin position="55"/>
        <end position="116"/>
    </location>
</feature>
<feature type="domain" description="IclR-ED" evidence="2">
    <location>
        <begin position="131"/>
        <end position="300"/>
    </location>
</feature>
<feature type="DNA-binding region" description="H-T-H motif" evidence="1">
    <location>
        <begin position="76"/>
        <end position="95"/>
    </location>
</feature>
<evidence type="ECO:0000255" key="1">
    <source>
        <dbReference type="PROSITE-ProRule" id="PRU00393"/>
    </source>
</evidence>
<evidence type="ECO:0000255" key="2">
    <source>
        <dbReference type="PROSITE-ProRule" id="PRU00394"/>
    </source>
</evidence>
<evidence type="ECO:0000269" key="3">
    <source>
    </source>
</evidence>
<evidence type="ECO:0000269" key="4">
    <source>
    </source>
</evidence>
<evidence type="ECO:0000269" key="5">
    <source ref="3"/>
</evidence>
<evidence type="ECO:0000303" key="6">
    <source>
    </source>
</evidence>
<evidence type="ECO:0000305" key="7"/>
<protein>
    <recommendedName>
        <fullName evidence="7">HTH-type transcriptional regulator KdgR</fullName>
    </recommendedName>
    <alternativeName>
        <fullName>Pectin degradation repressor protein KdgR</fullName>
    </alternativeName>
</protein>
<dbReference type="EMBL" id="X62072">
    <property type="protein sequence ID" value="CAA43986.1"/>
    <property type="molecule type" value="Genomic_DNA"/>
</dbReference>
<dbReference type="PIR" id="S17713">
    <property type="entry name" value="S17713"/>
</dbReference>
<dbReference type="SMR" id="P37728"/>
<dbReference type="GO" id="GO:0005737">
    <property type="term" value="C:cytoplasm"/>
    <property type="evidence" value="ECO:0007669"/>
    <property type="project" value="UniProtKB-SubCell"/>
</dbReference>
<dbReference type="GO" id="GO:0003677">
    <property type="term" value="F:DNA binding"/>
    <property type="evidence" value="ECO:0007669"/>
    <property type="project" value="UniProtKB-KW"/>
</dbReference>
<dbReference type="GO" id="GO:0003700">
    <property type="term" value="F:DNA-binding transcription factor activity"/>
    <property type="evidence" value="ECO:0007669"/>
    <property type="project" value="TreeGrafter"/>
</dbReference>
<dbReference type="GO" id="GO:0045892">
    <property type="term" value="P:negative regulation of DNA-templated transcription"/>
    <property type="evidence" value="ECO:0007669"/>
    <property type="project" value="TreeGrafter"/>
</dbReference>
<dbReference type="CDD" id="cd00090">
    <property type="entry name" value="HTH_ARSR"/>
    <property type="match status" value="1"/>
</dbReference>
<dbReference type="FunFam" id="1.10.10.10:FF:000109">
    <property type="entry name" value="DNA-binding transcriptional regulator KdgR"/>
    <property type="match status" value="1"/>
</dbReference>
<dbReference type="FunFam" id="3.30.450.40:FF:000009">
    <property type="entry name" value="DNA-binding transcriptional regulator KdgR"/>
    <property type="match status" value="1"/>
</dbReference>
<dbReference type="Gene3D" id="3.30.450.40">
    <property type="match status" value="1"/>
</dbReference>
<dbReference type="Gene3D" id="1.10.10.10">
    <property type="entry name" value="Winged helix-like DNA-binding domain superfamily/Winged helix DNA-binding domain"/>
    <property type="match status" value="1"/>
</dbReference>
<dbReference type="InterPro" id="IPR011991">
    <property type="entry name" value="ArsR-like_HTH"/>
</dbReference>
<dbReference type="InterPro" id="IPR029016">
    <property type="entry name" value="GAF-like_dom_sf"/>
</dbReference>
<dbReference type="InterPro" id="IPR050707">
    <property type="entry name" value="HTH_MetabolicPath_Reg"/>
</dbReference>
<dbReference type="InterPro" id="IPR014757">
    <property type="entry name" value="Tscrpt_reg_IclR_C"/>
</dbReference>
<dbReference type="InterPro" id="IPR005471">
    <property type="entry name" value="Tscrpt_reg_IclR_N"/>
</dbReference>
<dbReference type="InterPro" id="IPR036388">
    <property type="entry name" value="WH-like_DNA-bd_sf"/>
</dbReference>
<dbReference type="InterPro" id="IPR036390">
    <property type="entry name" value="WH_DNA-bd_sf"/>
</dbReference>
<dbReference type="NCBIfam" id="NF011671">
    <property type="entry name" value="PRK15090.1"/>
    <property type="match status" value="1"/>
</dbReference>
<dbReference type="PANTHER" id="PTHR30136">
    <property type="entry name" value="HELIX-TURN-HELIX TRANSCRIPTIONAL REGULATOR, ICLR FAMILY"/>
    <property type="match status" value="1"/>
</dbReference>
<dbReference type="PANTHER" id="PTHR30136:SF7">
    <property type="entry name" value="HTH-TYPE TRANSCRIPTIONAL REGULATOR KDGR-RELATED"/>
    <property type="match status" value="1"/>
</dbReference>
<dbReference type="Pfam" id="PF09339">
    <property type="entry name" value="HTH_IclR"/>
    <property type="match status" value="1"/>
</dbReference>
<dbReference type="Pfam" id="PF01614">
    <property type="entry name" value="IclR_C"/>
    <property type="match status" value="1"/>
</dbReference>
<dbReference type="SMART" id="SM00346">
    <property type="entry name" value="HTH_ICLR"/>
    <property type="match status" value="1"/>
</dbReference>
<dbReference type="SUPFAM" id="SSF55781">
    <property type="entry name" value="GAF domain-like"/>
    <property type="match status" value="1"/>
</dbReference>
<dbReference type="SUPFAM" id="SSF46785">
    <property type="entry name" value="Winged helix' DNA-binding domain"/>
    <property type="match status" value="1"/>
</dbReference>
<dbReference type="PROSITE" id="PS51077">
    <property type="entry name" value="HTH_ICLR"/>
    <property type="match status" value="1"/>
</dbReference>
<dbReference type="PROSITE" id="PS51078">
    <property type="entry name" value="ICLR_ED"/>
    <property type="match status" value="1"/>
</dbReference>
<accession>P37728</accession>